<comment type="function">
    <text evidence="2 3">Component of the ubiquinol-cytochrome c oxidoreductase, a multisubunit transmembrane complex that is part of the mitochondrial electron transport chain which drives oxidative phosphorylation. The respiratory chain contains 3 multisubunit complexes succinate dehydrogenase (complex II, CII), ubiquinol-cytochrome c oxidoreductase (cytochrome b-c1 complex, complex III, CIII) and cytochrome c oxidase (complex IV, CIV), that cooperate to transfer electrons derived from NADH and succinate to molecular oxygen, creating an electrochemical gradient over the inner membrane that drives transmembrane transport and the ATP synthase. The cytochrome b-c1 complex catalyzes electron transfer from ubiquinol to cytochrome c, linking this redox reaction to translocation of protons across the mitochondrial inner membrane, with protons being carried across the membrane as hydrogens on the quinol. In the process called Q cycle, 2 protons are consumed from the matrix, 4 protons are released into the intermembrane space and 2 electrons are passed to cytochrome c. QCR10 has a role in CIII assembly and RIP1 stability.</text>
</comment>
<comment type="subunit">
    <text evidence="1 2 3">Component of the ubiquinol-cytochrome c oxidoreductase (cytochrome b-c1 complex, complex III, CIII), a multisubunit enzyme composed of 11 subunits (PubMed:34616041, PubMed:38575788). The complex is composed of 3 respiratory subunits cytochrome b, cytochrome c1 and Rieske protein UQCRFS1, 2 core protein subunits UQCRC1/QCR1 and UQCRC2/QCR2, and 6 low-molecular weight protein subunits UQCRH/QCR6, UQCRB/QCR7, UQCRQ/QCR8, UQCR10/QCR9, UQCR11/QCR10 and subunit 9, the cleavage product of Rieske protein UQCRFS1 (PubMed:34616041, PubMed:38575788). The complex exists as an obligatory dimer and forms supercomplexes (SCs) in the inner mitochondrial membrane with NADH-ubiquinone oxidoreductase (complex I, CI) and cytochrome c oxidase (complex IV, CIV), resulting in different assemblies (supercomplex SCI(1)III(2)IV(1) and megacomplex MCI(2)III(2)IV(2)) (PubMed:19026783, PubMed:34616041, PubMed:38575788).</text>
</comment>
<comment type="subcellular location">
    <subcellularLocation>
        <location evidence="2 3">Mitochondrion inner membrane</location>
        <topology evidence="2">Single-pass membrane protein</topology>
    </subcellularLocation>
</comment>
<comment type="similarity">
    <text evidence="4">Belongs to the UQCR11/QCR10 family.</text>
</comment>
<gene>
    <name type="primary">Uqcr11</name>
    <name type="synonym">Uqcr</name>
</gene>
<reference key="1">
    <citation type="journal article" date="2005" name="Science">
        <title>The transcriptional landscape of the mammalian genome.</title>
        <authorList>
            <person name="Carninci P."/>
            <person name="Kasukawa T."/>
            <person name="Katayama S."/>
            <person name="Gough J."/>
            <person name="Frith M.C."/>
            <person name="Maeda N."/>
            <person name="Oyama R."/>
            <person name="Ravasi T."/>
            <person name="Lenhard B."/>
            <person name="Wells C."/>
            <person name="Kodzius R."/>
            <person name="Shimokawa K."/>
            <person name="Bajic V.B."/>
            <person name="Brenner S.E."/>
            <person name="Batalov S."/>
            <person name="Forrest A.R."/>
            <person name="Zavolan M."/>
            <person name="Davis M.J."/>
            <person name="Wilming L.G."/>
            <person name="Aidinis V."/>
            <person name="Allen J.E."/>
            <person name="Ambesi-Impiombato A."/>
            <person name="Apweiler R."/>
            <person name="Aturaliya R.N."/>
            <person name="Bailey T.L."/>
            <person name="Bansal M."/>
            <person name="Baxter L."/>
            <person name="Beisel K.W."/>
            <person name="Bersano T."/>
            <person name="Bono H."/>
            <person name="Chalk A.M."/>
            <person name="Chiu K.P."/>
            <person name="Choudhary V."/>
            <person name="Christoffels A."/>
            <person name="Clutterbuck D.R."/>
            <person name="Crowe M.L."/>
            <person name="Dalla E."/>
            <person name="Dalrymple B.P."/>
            <person name="de Bono B."/>
            <person name="Della Gatta G."/>
            <person name="di Bernardo D."/>
            <person name="Down T."/>
            <person name="Engstrom P."/>
            <person name="Fagiolini M."/>
            <person name="Faulkner G."/>
            <person name="Fletcher C.F."/>
            <person name="Fukushima T."/>
            <person name="Furuno M."/>
            <person name="Futaki S."/>
            <person name="Gariboldi M."/>
            <person name="Georgii-Hemming P."/>
            <person name="Gingeras T.R."/>
            <person name="Gojobori T."/>
            <person name="Green R.E."/>
            <person name="Gustincich S."/>
            <person name="Harbers M."/>
            <person name="Hayashi Y."/>
            <person name="Hensch T.K."/>
            <person name="Hirokawa N."/>
            <person name="Hill D."/>
            <person name="Huminiecki L."/>
            <person name="Iacono M."/>
            <person name="Ikeo K."/>
            <person name="Iwama A."/>
            <person name="Ishikawa T."/>
            <person name="Jakt M."/>
            <person name="Kanapin A."/>
            <person name="Katoh M."/>
            <person name="Kawasawa Y."/>
            <person name="Kelso J."/>
            <person name="Kitamura H."/>
            <person name="Kitano H."/>
            <person name="Kollias G."/>
            <person name="Krishnan S.P."/>
            <person name="Kruger A."/>
            <person name="Kummerfeld S.K."/>
            <person name="Kurochkin I.V."/>
            <person name="Lareau L.F."/>
            <person name="Lazarevic D."/>
            <person name="Lipovich L."/>
            <person name="Liu J."/>
            <person name="Liuni S."/>
            <person name="McWilliam S."/>
            <person name="Madan Babu M."/>
            <person name="Madera M."/>
            <person name="Marchionni L."/>
            <person name="Matsuda H."/>
            <person name="Matsuzawa S."/>
            <person name="Miki H."/>
            <person name="Mignone F."/>
            <person name="Miyake S."/>
            <person name="Morris K."/>
            <person name="Mottagui-Tabar S."/>
            <person name="Mulder N."/>
            <person name="Nakano N."/>
            <person name="Nakauchi H."/>
            <person name="Ng P."/>
            <person name="Nilsson R."/>
            <person name="Nishiguchi S."/>
            <person name="Nishikawa S."/>
            <person name="Nori F."/>
            <person name="Ohara O."/>
            <person name="Okazaki Y."/>
            <person name="Orlando V."/>
            <person name="Pang K.C."/>
            <person name="Pavan W.J."/>
            <person name="Pavesi G."/>
            <person name="Pesole G."/>
            <person name="Petrovsky N."/>
            <person name="Piazza S."/>
            <person name="Reed J."/>
            <person name="Reid J.F."/>
            <person name="Ring B.Z."/>
            <person name="Ringwald M."/>
            <person name="Rost B."/>
            <person name="Ruan Y."/>
            <person name="Salzberg S.L."/>
            <person name="Sandelin A."/>
            <person name="Schneider C."/>
            <person name="Schoenbach C."/>
            <person name="Sekiguchi K."/>
            <person name="Semple C.A."/>
            <person name="Seno S."/>
            <person name="Sessa L."/>
            <person name="Sheng Y."/>
            <person name="Shibata Y."/>
            <person name="Shimada H."/>
            <person name="Shimada K."/>
            <person name="Silva D."/>
            <person name="Sinclair B."/>
            <person name="Sperling S."/>
            <person name="Stupka E."/>
            <person name="Sugiura K."/>
            <person name="Sultana R."/>
            <person name="Takenaka Y."/>
            <person name="Taki K."/>
            <person name="Tammoja K."/>
            <person name="Tan S.L."/>
            <person name="Tang S."/>
            <person name="Taylor M.S."/>
            <person name="Tegner J."/>
            <person name="Teichmann S.A."/>
            <person name="Ueda H.R."/>
            <person name="van Nimwegen E."/>
            <person name="Verardo R."/>
            <person name="Wei C.L."/>
            <person name="Yagi K."/>
            <person name="Yamanishi H."/>
            <person name="Zabarovsky E."/>
            <person name="Zhu S."/>
            <person name="Zimmer A."/>
            <person name="Hide W."/>
            <person name="Bult C."/>
            <person name="Grimmond S.M."/>
            <person name="Teasdale R.D."/>
            <person name="Liu E.T."/>
            <person name="Brusic V."/>
            <person name="Quackenbush J."/>
            <person name="Wahlestedt C."/>
            <person name="Mattick J.S."/>
            <person name="Hume D.A."/>
            <person name="Kai C."/>
            <person name="Sasaki D."/>
            <person name="Tomaru Y."/>
            <person name="Fukuda S."/>
            <person name="Kanamori-Katayama M."/>
            <person name="Suzuki M."/>
            <person name="Aoki J."/>
            <person name="Arakawa T."/>
            <person name="Iida J."/>
            <person name="Imamura K."/>
            <person name="Itoh M."/>
            <person name="Kato T."/>
            <person name="Kawaji H."/>
            <person name="Kawagashira N."/>
            <person name="Kawashima T."/>
            <person name="Kojima M."/>
            <person name="Kondo S."/>
            <person name="Konno H."/>
            <person name="Nakano K."/>
            <person name="Ninomiya N."/>
            <person name="Nishio T."/>
            <person name="Okada M."/>
            <person name="Plessy C."/>
            <person name="Shibata K."/>
            <person name="Shiraki T."/>
            <person name="Suzuki S."/>
            <person name="Tagami M."/>
            <person name="Waki K."/>
            <person name="Watahiki A."/>
            <person name="Okamura-Oho Y."/>
            <person name="Suzuki H."/>
            <person name="Kawai J."/>
            <person name="Hayashizaki Y."/>
        </authorList>
    </citation>
    <scope>NUCLEOTIDE SEQUENCE [LARGE SCALE MRNA]</scope>
    <source>
        <strain>BALB/cJ</strain>
        <strain>C57BL/6J</strain>
        <tissue>Brain</tissue>
        <tissue>Heart</tissue>
        <tissue>Hippocampus</tissue>
    </source>
</reference>
<reference key="2">
    <citation type="journal article" date="2004" name="Genome Res.">
        <title>The status, quality, and expansion of the NIH full-length cDNA project: the Mammalian Gene Collection (MGC).</title>
        <authorList>
            <consortium name="The MGC Project Team"/>
        </authorList>
    </citation>
    <scope>NUCLEOTIDE SEQUENCE [LARGE SCALE MRNA]</scope>
    <source>
        <strain>FVB/N</strain>
        <tissue>Kidney</tissue>
    </source>
</reference>
<reference key="3">
    <citation type="journal article" date="2008" name="Mol. Cell">
        <title>Respiratory active mitochondrial supercomplexes.</title>
        <authorList>
            <person name="Acin-Perez R."/>
            <person name="Fernandez-Silva P."/>
            <person name="Peleato M.L."/>
            <person name="Perez-Martos A."/>
            <person name="Enriquez J.A."/>
        </authorList>
    </citation>
    <scope>SUBUNIT</scope>
</reference>
<reference evidence="5 6" key="4">
    <citation type="journal article" date="2021" name="Nature">
        <title>Structure and assembly of the mammalian mitochondrial supercomplex CIII2CIV.</title>
        <authorList>
            <person name="Vercellino I."/>
            <person name="Sazanov L.A."/>
        </authorList>
    </citation>
    <scope>STRUCTURE BY ELECTRON MICROSCOPY (3.20 ANGSTROMS) IN COMPLEX WITH MITOCHONDRIAL RESPIRATORY SUPERCOMPLEX</scope>
    <scope>FUNCTION</scope>
    <scope>SUBCELLULAR LOCATION</scope>
    <scope>SUBUNIT</scope>
</reference>
<reference evidence="7" key="5">
    <citation type="journal article" date="2024" name="Nat. Struct. Mol. Biol.">
        <title>SCAF1 drives the compositional diversity of mammalian respirasomes.</title>
        <authorList>
            <person name="Vercellino I."/>
            <person name="Sazanov L.A."/>
        </authorList>
    </citation>
    <scope>STRUCTURE BY ELECTRON MICROSCOPY (3.60 ANGSTROMS) IN COMPLEX WITH MITOCHONDRIAL RESPIRATORY SUPERCOMPLEX</scope>
    <scope>FUNCTION</scope>
    <scope>SUBCELLULAR LOCATION</scope>
    <scope>SUBUNIT</scope>
</reference>
<feature type="chain" id="PRO_0000193561" description="Cytochrome b-c1 complex subunit 10">
    <location>
        <begin position="1"/>
        <end position="56"/>
    </location>
</feature>
<feature type="topological domain" description="Mitochondrial matrix" evidence="2 5 6">
    <location>
        <begin position="1"/>
        <end position="16"/>
    </location>
</feature>
<feature type="transmembrane region" description="Helical" evidence="2 5 6">
    <location>
        <begin position="17"/>
        <end position="38"/>
    </location>
</feature>
<feature type="topological domain" description="Mitochondrial intermembrane" evidence="2 5 6">
    <location>
        <begin position="39"/>
        <end position="56"/>
    </location>
</feature>
<feature type="helix" evidence="8">
    <location>
        <begin position="3"/>
        <end position="5"/>
    </location>
</feature>
<feature type="helix" evidence="9">
    <location>
        <begin position="8"/>
        <end position="36"/>
    </location>
</feature>
<feature type="helix" evidence="9">
    <location>
        <begin position="39"/>
        <end position="42"/>
    </location>
</feature>
<feature type="helix" evidence="9">
    <location>
        <begin position="47"/>
        <end position="51"/>
    </location>
</feature>
<sequence length="56" mass="6539">MLSRFLGPRYRELARNWIPTAGMWGTVGAVGLVWATDWRLILDWVPYINGKFKKDD</sequence>
<name>QCR10_MOUSE</name>
<protein>
    <recommendedName>
        <fullName>Cytochrome b-c1 complex subunit 10</fullName>
    </recommendedName>
    <alternativeName>
        <fullName>Complex III subunit 10</fullName>
    </alternativeName>
    <alternativeName>
        <fullName>Complex III subunit XI</fullName>
    </alternativeName>
    <alternativeName>
        <fullName>Ubiquinol-cytochrome c reductase complex 6.4 kDa protein</fullName>
    </alternativeName>
</protein>
<keyword id="KW-0002">3D-structure</keyword>
<keyword id="KW-0249">Electron transport</keyword>
<keyword id="KW-0472">Membrane</keyword>
<keyword id="KW-0496">Mitochondrion</keyword>
<keyword id="KW-0999">Mitochondrion inner membrane</keyword>
<keyword id="KW-1185">Reference proteome</keyword>
<keyword id="KW-0679">Respiratory chain</keyword>
<keyword id="KW-0812">Transmembrane</keyword>
<keyword id="KW-1133">Transmembrane helix</keyword>
<keyword id="KW-0813">Transport</keyword>
<evidence type="ECO:0000269" key="1">
    <source>
    </source>
</evidence>
<evidence type="ECO:0000269" key="2">
    <source>
    </source>
</evidence>
<evidence type="ECO:0000269" key="3">
    <source>
    </source>
</evidence>
<evidence type="ECO:0000305" key="4"/>
<evidence type="ECO:0007744" key="5">
    <source>
        <dbReference type="PDB" id="7O37"/>
    </source>
</evidence>
<evidence type="ECO:0007744" key="6">
    <source>
        <dbReference type="PDB" id="7O3C"/>
    </source>
</evidence>
<evidence type="ECO:0007744" key="7">
    <source>
        <dbReference type="PDB" id="8PW5"/>
    </source>
</evidence>
<evidence type="ECO:0007829" key="8">
    <source>
        <dbReference type="PDB" id="7O37"/>
    </source>
</evidence>
<evidence type="ECO:0007829" key="9">
    <source>
        <dbReference type="PDB" id="7O3H"/>
    </source>
</evidence>
<dbReference type="EMBL" id="AK003033">
    <property type="protein sequence ID" value="BAB22521.1"/>
    <property type="molecule type" value="mRNA"/>
</dbReference>
<dbReference type="EMBL" id="AK003443">
    <property type="protein sequence ID" value="BAB22793.1"/>
    <property type="molecule type" value="mRNA"/>
</dbReference>
<dbReference type="EMBL" id="AK013513">
    <property type="protein sequence ID" value="BAB28890.1"/>
    <property type="molecule type" value="mRNA"/>
</dbReference>
<dbReference type="EMBL" id="AK167946">
    <property type="protein sequence ID" value="BAE39949.1"/>
    <property type="molecule type" value="mRNA"/>
</dbReference>
<dbReference type="EMBL" id="AK168974">
    <property type="protein sequence ID" value="BAE40777.1"/>
    <property type="molecule type" value="mRNA"/>
</dbReference>
<dbReference type="EMBL" id="BC034408">
    <property type="protein sequence ID" value="AAH34408.1"/>
    <property type="molecule type" value="mRNA"/>
</dbReference>
<dbReference type="CCDS" id="CCDS35981.1"/>
<dbReference type="RefSeq" id="NP_079926.1">
    <property type="nucleotide sequence ID" value="NM_025650.2"/>
</dbReference>
<dbReference type="PDB" id="7O37">
    <property type="method" value="EM"/>
    <property type="resolution" value="3.20 A"/>
    <property type="chains" value="K/V=1-56"/>
</dbReference>
<dbReference type="PDB" id="7O3C">
    <property type="method" value="EM"/>
    <property type="resolution" value="3.30 A"/>
    <property type="chains" value="K/V=1-56"/>
</dbReference>
<dbReference type="PDB" id="7O3H">
    <property type="method" value="EM"/>
    <property type="resolution" value="2.60 A"/>
    <property type="chains" value="K/V=1-56"/>
</dbReference>
<dbReference type="PDB" id="8IAO">
    <property type="method" value="EM"/>
    <property type="resolution" value="4.20 A"/>
    <property type="chains" value="AK/Ak=1-56"/>
</dbReference>
<dbReference type="PDB" id="8IAR">
    <property type="method" value="EM"/>
    <property type="resolution" value="3.40 A"/>
    <property type="chains" value="AK/Ak=1-56"/>
</dbReference>
<dbReference type="PDB" id="8IB4">
    <property type="method" value="EM"/>
    <property type="resolution" value="4.30 A"/>
    <property type="chains" value="AK/Ak=1-56"/>
</dbReference>
<dbReference type="PDB" id="8IB7">
    <property type="method" value="EM"/>
    <property type="resolution" value="3.40 A"/>
    <property type="chains" value="AK/Ak=1-56"/>
</dbReference>
<dbReference type="PDB" id="8IB9">
    <property type="method" value="EM"/>
    <property type="resolution" value="4.30 A"/>
    <property type="chains" value="AK/Ak=1-56"/>
</dbReference>
<dbReference type="PDB" id="8IBC">
    <property type="method" value="EM"/>
    <property type="resolution" value="3.60 A"/>
    <property type="chains" value="AK/Ak=1-56"/>
</dbReference>
<dbReference type="PDB" id="8IBD">
    <property type="method" value="EM"/>
    <property type="resolution" value="4.20 A"/>
    <property type="chains" value="AK/Ak=1-56"/>
</dbReference>
<dbReference type="PDB" id="8IBG">
    <property type="method" value="EM"/>
    <property type="resolution" value="3.80 A"/>
    <property type="chains" value="AK/Ak=1-56"/>
</dbReference>
<dbReference type="PDB" id="8IC2">
    <property type="method" value="EM"/>
    <property type="resolution" value="6.30 A"/>
    <property type="chains" value="AK/Ak=1-56"/>
</dbReference>
<dbReference type="PDB" id="8IC5">
    <property type="method" value="EM"/>
    <property type="resolution" value="4.10 A"/>
    <property type="chains" value="AK/Ak=1-56"/>
</dbReference>
<dbReference type="PDB" id="8PW5">
    <property type="method" value="EM"/>
    <property type="resolution" value="3.60 A"/>
    <property type="chains" value="K/V=1-56"/>
</dbReference>
<dbReference type="PDB" id="8PW6">
    <property type="method" value="EM"/>
    <property type="resolution" value="3.30 A"/>
    <property type="chains" value="K/V=1-56"/>
</dbReference>
<dbReference type="PDB" id="8PW7">
    <property type="method" value="EM"/>
    <property type="resolution" value="3.50 A"/>
    <property type="chains" value="K/V=1-56"/>
</dbReference>
<dbReference type="PDB" id="8UCA">
    <property type="method" value="EM"/>
    <property type="resolution" value="3.70 A"/>
    <property type="chains" value="3K/3V=1-56"/>
</dbReference>
<dbReference type="PDBsum" id="7O37"/>
<dbReference type="PDBsum" id="7O3C"/>
<dbReference type="PDBsum" id="7O3H"/>
<dbReference type="PDBsum" id="8IAO"/>
<dbReference type="PDBsum" id="8IAR"/>
<dbReference type="PDBsum" id="8IB4"/>
<dbReference type="PDBsum" id="8IB7"/>
<dbReference type="PDBsum" id="8IB9"/>
<dbReference type="PDBsum" id="8IBC"/>
<dbReference type="PDBsum" id="8IBD"/>
<dbReference type="PDBsum" id="8IBG"/>
<dbReference type="PDBsum" id="8IC2"/>
<dbReference type="PDBsum" id="8IC5"/>
<dbReference type="PDBsum" id="8PW5"/>
<dbReference type="PDBsum" id="8PW6"/>
<dbReference type="PDBsum" id="8PW7"/>
<dbReference type="PDBsum" id="8UCA"/>
<dbReference type="EMDB" id="EMD-12702"/>
<dbReference type="EMDB" id="EMD-12703"/>
<dbReference type="EMDB" id="EMD-12706"/>
<dbReference type="EMDB" id="EMD-17989"/>
<dbReference type="EMDB" id="EMD-17990"/>
<dbReference type="EMDB" id="EMD-17991"/>
<dbReference type="EMDB" id="EMD-35313"/>
<dbReference type="EMDB" id="EMD-35316"/>
<dbReference type="EMDB" id="EMD-35331"/>
<dbReference type="EMDB" id="EMD-35334"/>
<dbReference type="EMDB" id="EMD-35336"/>
<dbReference type="EMDB" id="EMD-35339"/>
<dbReference type="EMDB" id="EMD-35340"/>
<dbReference type="EMDB" id="EMD-35343"/>
<dbReference type="EMDB" id="EMD-35352"/>
<dbReference type="EMDB" id="EMD-35355"/>
<dbReference type="EMDB" id="EMD-42122"/>
<dbReference type="SMR" id="Q9CPX8"/>
<dbReference type="ComplexPortal" id="CPX-563">
    <property type="entry name" value="Mitochondrial respiratory chain complex III"/>
</dbReference>
<dbReference type="CORUM" id="Q9CPX8"/>
<dbReference type="FunCoup" id="Q9CPX8">
    <property type="interactions" value="492"/>
</dbReference>
<dbReference type="STRING" id="10090.ENSMUSP00000020372"/>
<dbReference type="jPOST" id="Q9CPX8"/>
<dbReference type="PaxDb" id="10090-ENSMUSP00000020372"/>
<dbReference type="ProteomicsDB" id="301901"/>
<dbReference type="Pumba" id="Q9CPX8"/>
<dbReference type="TopDownProteomics" id="Q9CPX8"/>
<dbReference type="DNASU" id="66594"/>
<dbReference type="Ensembl" id="ENSMUST00000020372.6">
    <property type="protein sequence ID" value="ENSMUSP00000020372.6"/>
    <property type="gene ID" value="ENSMUSG00000020163.13"/>
</dbReference>
<dbReference type="GeneID" id="66594"/>
<dbReference type="KEGG" id="mmu:66594"/>
<dbReference type="UCSC" id="uc007gde.1">
    <property type="organism name" value="mouse"/>
</dbReference>
<dbReference type="AGR" id="MGI:1913844"/>
<dbReference type="CTD" id="10975"/>
<dbReference type="MGI" id="MGI:1913844">
    <property type="gene designation" value="Uqcr11"/>
</dbReference>
<dbReference type="VEuPathDB" id="HostDB:ENSMUSG00000020163"/>
<dbReference type="eggNOG" id="ENOG502S9FZ">
    <property type="taxonomic scope" value="Eukaryota"/>
</dbReference>
<dbReference type="GeneTree" id="ENSGT00390000018299"/>
<dbReference type="HOGENOM" id="CLU_211742_0_0_1"/>
<dbReference type="InParanoid" id="Q9CPX8"/>
<dbReference type="OMA" id="LAKNWMP"/>
<dbReference type="OrthoDB" id="15743at2759"/>
<dbReference type="PhylomeDB" id="Q9CPX8"/>
<dbReference type="TreeFam" id="TF105034"/>
<dbReference type="BioGRID-ORCS" id="66594">
    <property type="hits" value="7 hits in 75 CRISPR screens"/>
</dbReference>
<dbReference type="ChiTaRS" id="Uqcr11">
    <property type="organism name" value="mouse"/>
</dbReference>
<dbReference type="PRO" id="PR:Q9CPX8"/>
<dbReference type="Proteomes" id="UP000000589">
    <property type="component" value="Chromosome 10"/>
</dbReference>
<dbReference type="RNAct" id="Q9CPX8">
    <property type="molecule type" value="protein"/>
</dbReference>
<dbReference type="Bgee" id="ENSMUSG00000020163">
    <property type="expression patterns" value="Expressed in right kidney and 96 other cell types or tissues"/>
</dbReference>
<dbReference type="GO" id="GO:0005743">
    <property type="term" value="C:mitochondrial inner membrane"/>
    <property type="evidence" value="ECO:0000314"/>
    <property type="project" value="UniProtKB"/>
</dbReference>
<dbReference type="GO" id="GO:0005739">
    <property type="term" value="C:mitochondrion"/>
    <property type="evidence" value="ECO:0000314"/>
    <property type="project" value="MGI"/>
</dbReference>
<dbReference type="GO" id="GO:0045275">
    <property type="term" value="C:respiratory chain complex III"/>
    <property type="evidence" value="ECO:0000314"/>
    <property type="project" value="UniProtKB"/>
</dbReference>
<dbReference type="GO" id="GO:0045333">
    <property type="term" value="P:cellular respiration"/>
    <property type="evidence" value="ECO:0000303"/>
    <property type="project" value="ComplexPortal"/>
</dbReference>
<dbReference type="GO" id="GO:0006122">
    <property type="term" value="P:mitochondrial electron transport, ubiquinol to cytochrome c"/>
    <property type="evidence" value="ECO:0000303"/>
    <property type="project" value="ComplexPortal"/>
</dbReference>
<dbReference type="FunFam" id="1.20.5.220:FF:000004">
    <property type="entry name" value="Cytochrome b-c1 complex subunit 10"/>
    <property type="match status" value="1"/>
</dbReference>
<dbReference type="Gene3D" id="1.20.5.220">
    <property type="match status" value="1"/>
</dbReference>
<dbReference type="InterPro" id="IPR029027">
    <property type="entry name" value="Single_a-helix_sf"/>
</dbReference>
<dbReference type="InterPro" id="IPR015089">
    <property type="entry name" value="UQCR"/>
</dbReference>
<dbReference type="PANTHER" id="PTHR15420:SF2">
    <property type="entry name" value="CYTOCHROME B-C1 COMPLEX SUBUNIT 10"/>
    <property type="match status" value="1"/>
</dbReference>
<dbReference type="PANTHER" id="PTHR15420">
    <property type="entry name" value="UBIQUINOL-CYTOCHROME C REDUCTASE COMPLEX 6.4 KD PROTEIN"/>
    <property type="match status" value="1"/>
</dbReference>
<dbReference type="Pfam" id="PF08997">
    <property type="entry name" value="UCR_6-4kD"/>
    <property type="match status" value="1"/>
</dbReference>
<dbReference type="SUPFAM" id="SSF81518">
    <property type="entry name" value="Subunit XI (6.4 kDa protein) of cytochrome bc1 complex (Ubiquinol-cytochrome c reductase)"/>
    <property type="match status" value="1"/>
</dbReference>
<proteinExistence type="evidence at protein level"/>
<organism>
    <name type="scientific">Mus musculus</name>
    <name type="common">Mouse</name>
    <dbReference type="NCBI Taxonomy" id="10090"/>
    <lineage>
        <taxon>Eukaryota</taxon>
        <taxon>Metazoa</taxon>
        <taxon>Chordata</taxon>
        <taxon>Craniata</taxon>
        <taxon>Vertebrata</taxon>
        <taxon>Euteleostomi</taxon>
        <taxon>Mammalia</taxon>
        <taxon>Eutheria</taxon>
        <taxon>Euarchontoglires</taxon>
        <taxon>Glires</taxon>
        <taxon>Rodentia</taxon>
        <taxon>Myomorpha</taxon>
        <taxon>Muroidea</taxon>
        <taxon>Muridae</taxon>
        <taxon>Murinae</taxon>
        <taxon>Mus</taxon>
        <taxon>Mus</taxon>
    </lineage>
</organism>
<accession>Q9CPX8</accession>
<accession>Q3TFX1</accession>